<evidence type="ECO:0000255" key="1">
    <source>
        <dbReference type="HAMAP-Rule" id="MF_01366"/>
    </source>
</evidence>
<evidence type="ECO:0000305" key="2"/>
<evidence type="ECO:0007829" key="3">
    <source>
        <dbReference type="PDB" id="7M4V"/>
    </source>
</evidence>
<organism>
    <name type="scientific">Acinetobacter baumannii (strain AB0057)</name>
    <dbReference type="NCBI Taxonomy" id="480119"/>
    <lineage>
        <taxon>Bacteria</taxon>
        <taxon>Pseudomonadati</taxon>
        <taxon>Pseudomonadota</taxon>
        <taxon>Gammaproteobacteria</taxon>
        <taxon>Moraxellales</taxon>
        <taxon>Moraxellaceae</taxon>
        <taxon>Acinetobacter</taxon>
        <taxon>Acinetobacter calcoaceticus/baumannii complex</taxon>
    </lineage>
</organism>
<comment type="function">
    <text evidence="1">This protein is one of the early assembly proteins of the 50S ribosomal subunit, although it is not seen to bind rRNA by itself. It is important during the early stages of 50S assembly.</text>
</comment>
<comment type="subunit">
    <text evidence="1">Part of the 50S ribosomal subunit.</text>
</comment>
<comment type="similarity">
    <text evidence="1">Belongs to the universal ribosomal protein uL13 family.</text>
</comment>
<gene>
    <name evidence="1" type="primary">rplM</name>
    <name type="ordered locus">AB57_3451</name>
</gene>
<sequence>MKTLSAKPAEVQHDWFVVDATGKTLGRLATEIARRLRGKHKTSYTPHVDTGDYIIVINAEQVQVTGNKALDKKYYRHTEFPGGLKETNFEKLVAHKPEEIFERAVKGMLPKGPLGYAMIKKMKVYAGSEHPHAAQQPQVLDI</sequence>
<dbReference type="EMBL" id="CP001182">
    <property type="protein sequence ID" value="ACJ42019.1"/>
    <property type="molecule type" value="Genomic_DNA"/>
</dbReference>
<dbReference type="RefSeq" id="WP_000854895.1">
    <property type="nucleotide sequence ID" value="NC_011586.2"/>
</dbReference>
<dbReference type="PDB" id="6V39">
    <property type="method" value="EM"/>
    <property type="resolution" value="3.04 A"/>
    <property type="chains" value="I=1-142"/>
</dbReference>
<dbReference type="PDB" id="6V3A">
    <property type="method" value="EM"/>
    <property type="resolution" value="2.82 A"/>
    <property type="chains" value="I=1-142"/>
</dbReference>
<dbReference type="PDB" id="6V3B">
    <property type="method" value="EM"/>
    <property type="resolution" value="2.91 A"/>
    <property type="chains" value="I=1-142"/>
</dbReference>
<dbReference type="PDB" id="6V3D">
    <property type="method" value="EM"/>
    <property type="resolution" value="2.95 A"/>
    <property type="chains" value="I=1-142"/>
</dbReference>
<dbReference type="PDB" id="7M4V">
    <property type="method" value="EM"/>
    <property type="resolution" value="2.54 A"/>
    <property type="chains" value="I=1-142"/>
</dbReference>
<dbReference type="PDB" id="7M4W">
    <property type="method" value="EM"/>
    <property type="resolution" value="2.55 A"/>
    <property type="chains" value="I=1-142"/>
</dbReference>
<dbReference type="PDB" id="7M4X">
    <property type="method" value="EM"/>
    <property type="resolution" value="2.66 A"/>
    <property type="chains" value="I=1-142"/>
</dbReference>
<dbReference type="PDB" id="7M4Y">
    <property type="method" value="EM"/>
    <property type="resolution" value="2.50 A"/>
    <property type="chains" value="I=1-142"/>
</dbReference>
<dbReference type="PDB" id="7M4Z">
    <property type="method" value="EM"/>
    <property type="resolution" value="2.92 A"/>
    <property type="chains" value="I=1-142"/>
</dbReference>
<dbReference type="PDB" id="7RYF">
    <property type="method" value="EM"/>
    <property type="resolution" value="2.65 A"/>
    <property type="chains" value="I=1-142"/>
</dbReference>
<dbReference type="PDB" id="7RYG">
    <property type="method" value="EM"/>
    <property type="resolution" value="2.38 A"/>
    <property type="chains" value="I=1-142"/>
</dbReference>
<dbReference type="PDB" id="7RYH">
    <property type="method" value="EM"/>
    <property type="resolution" value="2.43 A"/>
    <property type="chains" value="I=1-142"/>
</dbReference>
<dbReference type="PDB" id="7UVV">
    <property type="method" value="EM"/>
    <property type="resolution" value="2.50 A"/>
    <property type="chains" value="I=1-142"/>
</dbReference>
<dbReference type="PDB" id="7UVW">
    <property type="method" value="EM"/>
    <property type="resolution" value="2.37 A"/>
    <property type="chains" value="I=1-142"/>
</dbReference>
<dbReference type="PDB" id="7UVX">
    <property type="method" value="EM"/>
    <property type="resolution" value="2.35 A"/>
    <property type="chains" value="I=1-142"/>
</dbReference>
<dbReference type="PDB" id="7UVY">
    <property type="method" value="EM"/>
    <property type="resolution" value="2.39 A"/>
    <property type="chains" value="I=1-142"/>
</dbReference>
<dbReference type="PDB" id="7UVZ">
    <property type="method" value="EM"/>
    <property type="resolution" value="2.21 A"/>
    <property type="chains" value="I=1-142"/>
</dbReference>
<dbReference type="PDB" id="7UW1">
    <property type="method" value="EM"/>
    <property type="resolution" value="2.21 A"/>
    <property type="chains" value="I=1-142"/>
</dbReference>
<dbReference type="PDBsum" id="6V39"/>
<dbReference type="PDBsum" id="6V3A"/>
<dbReference type="PDBsum" id="6V3B"/>
<dbReference type="PDBsum" id="6V3D"/>
<dbReference type="PDBsum" id="7M4V"/>
<dbReference type="PDBsum" id="7M4W"/>
<dbReference type="PDBsum" id="7M4X"/>
<dbReference type="PDBsum" id="7M4Y"/>
<dbReference type="PDBsum" id="7M4Z"/>
<dbReference type="PDBsum" id="7RYF"/>
<dbReference type="PDBsum" id="7RYG"/>
<dbReference type="PDBsum" id="7RYH"/>
<dbReference type="PDBsum" id="7UVV"/>
<dbReference type="PDBsum" id="7UVW"/>
<dbReference type="PDBsum" id="7UVX"/>
<dbReference type="PDBsum" id="7UVY"/>
<dbReference type="PDBsum" id="7UVZ"/>
<dbReference type="PDBsum" id="7UW1"/>
<dbReference type="EMDB" id="EMD-21030"/>
<dbReference type="EMDB" id="EMD-21031"/>
<dbReference type="EMDB" id="EMD-21032"/>
<dbReference type="EMDB" id="EMD-21033"/>
<dbReference type="EMDB" id="EMD-23667"/>
<dbReference type="EMDB" id="EMD-23668"/>
<dbReference type="EMDB" id="EMD-23669"/>
<dbReference type="EMDB" id="EMD-23670"/>
<dbReference type="EMDB" id="EMD-23671"/>
<dbReference type="EMDB" id="EMD-24738"/>
<dbReference type="EMDB" id="EMD-24739"/>
<dbReference type="EMDB" id="EMD-24740"/>
<dbReference type="EMDB" id="EMD-26817"/>
<dbReference type="EMDB" id="EMD-26818"/>
<dbReference type="EMDB" id="EMD-26819"/>
<dbReference type="EMDB" id="EMD-26820"/>
<dbReference type="EMDB" id="EMD-26821"/>
<dbReference type="EMDB" id="EMD-26822"/>
<dbReference type="SMR" id="B7I9B0"/>
<dbReference type="IntAct" id="B7I9B0">
    <property type="interactions" value="2"/>
</dbReference>
<dbReference type="KEGG" id="abn:AB57_3451"/>
<dbReference type="HOGENOM" id="CLU_082184_2_2_6"/>
<dbReference type="Proteomes" id="UP000007094">
    <property type="component" value="Chromosome"/>
</dbReference>
<dbReference type="GO" id="GO:0022625">
    <property type="term" value="C:cytosolic large ribosomal subunit"/>
    <property type="evidence" value="ECO:0007669"/>
    <property type="project" value="TreeGrafter"/>
</dbReference>
<dbReference type="GO" id="GO:0003729">
    <property type="term" value="F:mRNA binding"/>
    <property type="evidence" value="ECO:0007669"/>
    <property type="project" value="TreeGrafter"/>
</dbReference>
<dbReference type="GO" id="GO:0003735">
    <property type="term" value="F:structural constituent of ribosome"/>
    <property type="evidence" value="ECO:0007669"/>
    <property type="project" value="InterPro"/>
</dbReference>
<dbReference type="GO" id="GO:0017148">
    <property type="term" value="P:negative regulation of translation"/>
    <property type="evidence" value="ECO:0007669"/>
    <property type="project" value="TreeGrafter"/>
</dbReference>
<dbReference type="GO" id="GO:0006412">
    <property type="term" value="P:translation"/>
    <property type="evidence" value="ECO:0007669"/>
    <property type="project" value="UniProtKB-UniRule"/>
</dbReference>
<dbReference type="CDD" id="cd00392">
    <property type="entry name" value="Ribosomal_L13"/>
    <property type="match status" value="1"/>
</dbReference>
<dbReference type="FunFam" id="3.90.1180.10:FF:000001">
    <property type="entry name" value="50S ribosomal protein L13"/>
    <property type="match status" value="1"/>
</dbReference>
<dbReference type="Gene3D" id="3.90.1180.10">
    <property type="entry name" value="Ribosomal protein L13"/>
    <property type="match status" value="1"/>
</dbReference>
<dbReference type="HAMAP" id="MF_01366">
    <property type="entry name" value="Ribosomal_uL13"/>
    <property type="match status" value="1"/>
</dbReference>
<dbReference type="InterPro" id="IPR005822">
    <property type="entry name" value="Ribosomal_uL13"/>
</dbReference>
<dbReference type="InterPro" id="IPR005823">
    <property type="entry name" value="Ribosomal_uL13_bac-type"/>
</dbReference>
<dbReference type="InterPro" id="IPR036899">
    <property type="entry name" value="Ribosomal_uL13_sf"/>
</dbReference>
<dbReference type="NCBIfam" id="TIGR01066">
    <property type="entry name" value="rplM_bact"/>
    <property type="match status" value="1"/>
</dbReference>
<dbReference type="PANTHER" id="PTHR11545:SF2">
    <property type="entry name" value="LARGE RIBOSOMAL SUBUNIT PROTEIN UL13M"/>
    <property type="match status" value="1"/>
</dbReference>
<dbReference type="PANTHER" id="PTHR11545">
    <property type="entry name" value="RIBOSOMAL PROTEIN L13"/>
    <property type="match status" value="1"/>
</dbReference>
<dbReference type="Pfam" id="PF00572">
    <property type="entry name" value="Ribosomal_L13"/>
    <property type="match status" value="1"/>
</dbReference>
<dbReference type="PIRSF" id="PIRSF002181">
    <property type="entry name" value="Ribosomal_L13"/>
    <property type="match status" value="1"/>
</dbReference>
<dbReference type="SUPFAM" id="SSF52161">
    <property type="entry name" value="Ribosomal protein L13"/>
    <property type="match status" value="1"/>
</dbReference>
<accession>B7I9B0</accession>
<feature type="chain" id="PRO_1000144076" description="Large ribosomal subunit protein uL13">
    <location>
        <begin position="1"/>
        <end position="142"/>
    </location>
</feature>
<feature type="helix" evidence="3">
    <location>
        <begin position="8"/>
        <end position="10"/>
    </location>
</feature>
<feature type="strand" evidence="3">
    <location>
        <begin position="15"/>
        <end position="19"/>
    </location>
</feature>
<feature type="helix" evidence="3">
    <location>
        <begin position="25"/>
        <end position="37"/>
    </location>
</feature>
<feature type="turn" evidence="3">
    <location>
        <begin position="38"/>
        <end position="40"/>
    </location>
</feature>
<feature type="strand" evidence="3">
    <location>
        <begin position="53"/>
        <end position="57"/>
    </location>
</feature>
<feature type="helix" evidence="3">
    <location>
        <begin position="59"/>
        <end position="61"/>
    </location>
</feature>
<feature type="helix" evidence="3">
    <location>
        <begin position="68"/>
        <end position="71"/>
    </location>
</feature>
<feature type="strand" evidence="3">
    <location>
        <begin position="73"/>
        <end position="77"/>
    </location>
</feature>
<feature type="strand" evidence="3">
    <location>
        <begin position="84"/>
        <end position="88"/>
    </location>
</feature>
<feature type="helix" evidence="3">
    <location>
        <begin position="89"/>
        <end position="95"/>
    </location>
</feature>
<feature type="helix" evidence="3">
    <location>
        <begin position="97"/>
        <end position="106"/>
    </location>
</feature>
<feature type="helix" evidence="3">
    <location>
        <begin position="113"/>
        <end position="119"/>
    </location>
</feature>
<feature type="strand" evidence="3">
    <location>
        <begin position="122"/>
        <end position="124"/>
    </location>
</feature>
<feature type="strand" evidence="3">
    <location>
        <begin position="126"/>
        <end position="128"/>
    </location>
</feature>
<feature type="helix" evidence="3">
    <location>
        <begin position="133"/>
        <end position="135"/>
    </location>
</feature>
<protein>
    <recommendedName>
        <fullName evidence="1">Large ribosomal subunit protein uL13</fullName>
    </recommendedName>
    <alternativeName>
        <fullName evidence="2">50S ribosomal protein L13</fullName>
    </alternativeName>
</protein>
<name>RL13_ACIB5</name>
<proteinExistence type="evidence at protein level"/>
<reference key="1">
    <citation type="journal article" date="2008" name="J. Bacteriol.">
        <title>Comparative genome sequence analysis of multidrug-resistant Acinetobacter baumannii.</title>
        <authorList>
            <person name="Adams M.D."/>
            <person name="Goglin K."/>
            <person name="Molyneaux N."/>
            <person name="Hujer K.M."/>
            <person name="Lavender H."/>
            <person name="Jamison J.J."/>
            <person name="MacDonald I.J."/>
            <person name="Martin K.M."/>
            <person name="Russo T."/>
            <person name="Campagnari A.A."/>
            <person name="Hujer A.M."/>
            <person name="Bonomo R.A."/>
            <person name="Gill S.R."/>
        </authorList>
    </citation>
    <scope>NUCLEOTIDE SEQUENCE [LARGE SCALE GENOMIC DNA]</scope>
    <source>
        <strain>AB0057</strain>
    </source>
</reference>
<keyword id="KW-0002">3D-structure</keyword>
<keyword id="KW-0687">Ribonucleoprotein</keyword>
<keyword id="KW-0689">Ribosomal protein</keyword>